<protein>
    <recommendedName>
        <fullName evidence="1">sn-glycerol-3-phosphate import ATP-binding protein UgpC</fullName>
        <ecNumber evidence="1">7.6.2.10</ecNumber>
    </recommendedName>
</protein>
<reference key="1">
    <citation type="journal article" date="2006" name="Nat. Biotechnol.">
        <title>Genome sequence of the bioplastic-producing 'Knallgas' bacterium Ralstonia eutropha H16.</title>
        <authorList>
            <person name="Pohlmann A."/>
            <person name="Fricke W.F."/>
            <person name="Reinecke F."/>
            <person name="Kusian B."/>
            <person name="Liesegang H."/>
            <person name="Cramm R."/>
            <person name="Eitinger T."/>
            <person name="Ewering C."/>
            <person name="Poetter M."/>
            <person name="Schwartz E."/>
            <person name="Strittmatter A."/>
            <person name="Voss I."/>
            <person name="Gottschalk G."/>
            <person name="Steinbuechel A."/>
            <person name="Friedrich B."/>
            <person name="Bowien B."/>
        </authorList>
    </citation>
    <scope>NUCLEOTIDE SEQUENCE [LARGE SCALE GENOMIC DNA]</scope>
    <source>
        <strain>ATCC 17699 / DSM 428 / KCTC 22496 / NCIMB 10442 / H16 / Stanier 337</strain>
    </source>
</reference>
<gene>
    <name evidence="1" type="primary">ugpC</name>
    <name type="ordered locus">H16_A2327</name>
</gene>
<dbReference type="EC" id="7.6.2.10" evidence="1"/>
<dbReference type="EMBL" id="AM260479">
    <property type="protein sequence ID" value="CAJ93423.1"/>
    <property type="molecule type" value="Genomic_DNA"/>
</dbReference>
<dbReference type="RefSeq" id="WP_010809462.1">
    <property type="nucleotide sequence ID" value="NZ_CP039287.1"/>
</dbReference>
<dbReference type="SMR" id="Q0K998"/>
<dbReference type="STRING" id="381666.H16_A2327"/>
<dbReference type="KEGG" id="reh:H16_A2327"/>
<dbReference type="eggNOG" id="COG3842">
    <property type="taxonomic scope" value="Bacteria"/>
</dbReference>
<dbReference type="HOGENOM" id="CLU_000604_1_1_4"/>
<dbReference type="OrthoDB" id="5298774at2"/>
<dbReference type="Proteomes" id="UP000008210">
    <property type="component" value="Chromosome 1"/>
</dbReference>
<dbReference type="GO" id="GO:0055052">
    <property type="term" value="C:ATP-binding cassette (ABC) transporter complex, substrate-binding subunit-containing"/>
    <property type="evidence" value="ECO:0007669"/>
    <property type="project" value="TreeGrafter"/>
</dbReference>
<dbReference type="GO" id="GO:0015430">
    <property type="term" value="F:ABC-type glycerol-3-phosphate transporter activity"/>
    <property type="evidence" value="ECO:0007669"/>
    <property type="project" value="UniProtKB-EC"/>
</dbReference>
<dbReference type="GO" id="GO:0005524">
    <property type="term" value="F:ATP binding"/>
    <property type="evidence" value="ECO:0007669"/>
    <property type="project" value="UniProtKB-KW"/>
</dbReference>
<dbReference type="GO" id="GO:0016887">
    <property type="term" value="F:ATP hydrolysis activity"/>
    <property type="evidence" value="ECO:0007669"/>
    <property type="project" value="InterPro"/>
</dbReference>
<dbReference type="GO" id="GO:0016812">
    <property type="term" value="F:hydrolase activity, acting on carbon-nitrogen (but not peptide) bonds, in cyclic amides"/>
    <property type="evidence" value="ECO:0007669"/>
    <property type="project" value="InterPro"/>
</dbReference>
<dbReference type="GO" id="GO:0008643">
    <property type="term" value="P:carbohydrate transport"/>
    <property type="evidence" value="ECO:0007669"/>
    <property type="project" value="InterPro"/>
</dbReference>
<dbReference type="GO" id="GO:0001407">
    <property type="term" value="P:glycerophosphodiester transmembrane transport"/>
    <property type="evidence" value="ECO:0007669"/>
    <property type="project" value="TreeGrafter"/>
</dbReference>
<dbReference type="CDD" id="cd03301">
    <property type="entry name" value="ABC_MalK_N"/>
    <property type="match status" value="1"/>
</dbReference>
<dbReference type="FunFam" id="3.40.50.300:FF:000042">
    <property type="entry name" value="Maltose/maltodextrin ABC transporter, ATP-binding protein"/>
    <property type="match status" value="1"/>
</dbReference>
<dbReference type="Gene3D" id="2.40.50.100">
    <property type="match status" value="1"/>
</dbReference>
<dbReference type="Gene3D" id="2.40.50.140">
    <property type="entry name" value="Nucleic acid-binding proteins"/>
    <property type="match status" value="1"/>
</dbReference>
<dbReference type="Gene3D" id="3.40.50.300">
    <property type="entry name" value="P-loop containing nucleotide triphosphate hydrolases"/>
    <property type="match status" value="1"/>
</dbReference>
<dbReference type="InterPro" id="IPR003593">
    <property type="entry name" value="AAA+_ATPase"/>
</dbReference>
<dbReference type="InterPro" id="IPR003439">
    <property type="entry name" value="ABC_transporter-like_ATP-bd"/>
</dbReference>
<dbReference type="InterPro" id="IPR017871">
    <property type="entry name" value="ABC_transporter-like_CS"/>
</dbReference>
<dbReference type="InterPro" id="IPR015855">
    <property type="entry name" value="ABC_transpr_MalK-like"/>
</dbReference>
<dbReference type="InterPro" id="IPR047641">
    <property type="entry name" value="ABC_transpr_MalK/UgpC-like"/>
</dbReference>
<dbReference type="InterPro" id="IPR002195">
    <property type="entry name" value="Dihydroorotase_CS"/>
</dbReference>
<dbReference type="InterPro" id="IPR008995">
    <property type="entry name" value="Mo/tungstate-bd_C_term_dom"/>
</dbReference>
<dbReference type="InterPro" id="IPR012340">
    <property type="entry name" value="NA-bd_OB-fold"/>
</dbReference>
<dbReference type="InterPro" id="IPR027417">
    <property type="entry name" value="P-loop_NTPase"/>
</dbReference>
<dbReference type="InterPro" id="IPR013611">
    <property type="entry name" value="Transp-assoc_OB_typ2"/>
</dbReference>
<dbReference type="NCBIfam" id="NF008653">
    <property type="entry name" value="PRK11650.1"/>
    <property type="match status" value="1"/>
</dbReference>
<dbReference type="PANTHER" id="PTHR43875">
    <property type="entry name" value="MALTODEXTRIN IMPORT ATP-BINDING PROTEIN MSMX"/>
    <property type="match status" value="1"/>
</dbReference>
<dbReference type="PANTHER" id="PTHR43875:SF12">
    <property type="entry name" value="SN-GLYCEROL-3-PHOSPHATE IMPORT ATP-BINDING PROTEIN UGPC"/>
    <property type="match status" value="1"/>
</dbReference>
<dbReference type="Pfam" id="PF00005">
    <property type="entry name" value="ABC_tran"/>
    <property type="match status" value="1"/>
</dbReference>
<dbReference type="Pfam" id="PF08402">
    <property type="entry name" value="TOBE_2"/>
    <property type="match status" value="1"/>
</dbReference>
<dbReference type="SMART" id="SM00382">
    <property type="entry name" value="AAA"/>
    <property type="match status" value="1"/>
</dbReference>
<dbReference type="SUPFAM" id="SSF50331">
    <property type="entry name" value="MOP-like"/>
    <property type="match status" value="1"/>
</dbReference>
<dbReference type="SUPFAM" id="SSF52540">
    <property type="entry name" value="P-loop containing nucleoside triphosphate hydrolases"/>
    <property type="match status" value="1"/>
</dbReference>
<dbReference type="PROSITE" id="PS00211">
    <property type="entry name" value="ABC_TRANSPORTER_1"/>
    <property type="match status" value="1"/>
</dbReference>
<dbReference type="PROSITE" id="PS50893">
    <property type="entry name" value="ABC_TRANSPORTER_2"/>
    <property type="match status" value="1"/>
</dbReference>
<dbReference type="PROSITE" id="PS51315">
    <property type="entry name" value="UGPC"/>
    <property type="match status" value="1"/>
</dbReference>
<feature type="chain" id="PRO_0000289758" description="sn-glycerol-3-phosphate import ATP-binding protein UgpC">
    <location>
        <begin position="1"/>
        <end position="366"/>
    </location>
</feature>
<feature type="domain" description="ABC transporter" evidence="1">
    <location>
        <begin position="4"/>
        <end position="235"/>
    </location>
</feature>
<feature type="binding site" evidence="1">
    <location>
        <begin position="37"/>
        <end position="44"/>
    </location>
    <ligand>
        <name>ATP</name>
        <dbReference type="ChEBI" id="CHEBI:30616"/>
    </ligand>
</feature>
<name>UGPC_CUPNH</name>
<proteinExistence type="inferred from homology"/>
<organism>
    <name type="scientific">Cupriavidus necator (strain ATCC 17699 / DSM 428 / KCTC 22496 / NCIMB 10442 / H16 / Stanier 337)</name>
    <name type="common">Ralstonia eutropha</name>
    <dbReference type="NCBI Taxonomy" id="381666"/>
    <lineage>
        <taxon>Bacteria</taxon>
        <taxon>Pseudomonadati</taxon>
        <taxon>Pseudomonadota</taxon>
        <taxon>Betaproteobacteria</taxon>
        <taxon>Burkholderiales</taxon>
        <taxon>Burkholderiaceae</taxon>
        <taxon>Cupriavidus</taxon>
    </lineage>
</organism>
<sequence>MAKLSLRNVQKTYAGSVQVVHGIDMEIADGEFIVIVGPSGCGKSTLLRMVAGLETITGGEIHIGDKVVNNLEPAERDIAMVFQNYALYPHMSVYDNMAYGLKIRGMAKAEIAQRVNHAAGILELAPLLDRKPRQLSGGQRQRVAMGRAIVREPAVFLFDEPLSNLDAKLRVQMRLELKELHRRLGTTSLYVTHDQVEAMTLADRMMVLNAGRVEQIGTPLEVYSRPASTFVAGFIGSPPMNLIPVARNAGGDTGAQMRVVAKEGEAANATLGHLPMGLHLPEQALLGLRPEHIEPCAAHEAIAEVDVRVVEALGADSFAYGSLGGQAVVVRLDSHAHVRAGDRLPVTSSAEHLHFFAPDTGKRIEA</sequence>
<accession>Q0K998</accession>
<comment type="function">
    <text evidence="1">Part of the ABC transporter complex UgpBAEC involved in sn-glycerol-3-phosphate (G3P) import. Responsible for energy coupling to the transport system.</text>
</comment>
<comment type="catalytic activity">
    <reaction evidence="1">
        <text>sn-glycerol 3-phosphate(out) + ATP + H2O = sn-glycerol 3-phosphate(in) + ADP + phosphate + H(+)</text>
        <dbReference type="Rhea" id="RHEA:21668"/>
        <dbReference type="ChEBI" id="CHEBI:15377"/>
        <dbReference type="ChEBI" id="CHEBI:15378"/>
        <dbReference type="ChEBI" id="CHEBI:30616"/>
        <dbReference type="ChEBI" id="CHEBI:43474"/>
        <dbReference type="ChEBI" id="CHEBI:57597"/>
        <dbReference type="ChEBI" id="CHEBI:456216"/>
        <dbReference type="EC" id="7.6.2.10"/>
    </reaction>
</comment>
<comment type="subunit">
    <text evidence="1">The complex is composed of two ATP-binding proteins (UgpC), two transmembrane proteins (UgpA and UgpE) and a solute-binding protein (UgpB).</text>
</comment>
<comment type="subcellular location">
    <subcellularLocation>
        <location evidence="1">Cell inner membrane</location>
        <topology evidence="1">Peripheral membrane protein</topology>
    </subcellularLocation>
</comment>
<comment type="similarity">
    <text evidence="1">Belongs to the ABC transporter superfamily. sn-glycerol-3-phosphate importer (TC 3.A.1.1.3) family.</text>
</comment>
<evidence type="ECO:0000255" key="1">
    <source>
        <dbReference type="HAMAP-Rule" id="MF_01727"/>
    </source>
</evidence>
<keyword id="KW-0067">ATP-binding</keyword>
<keyword id="KW-0997">Cell inner membrane</keyword>
<keyword id="KW-1003">Cell membrane</keyword>
<keyword id="KW-0472">Membrane</keyword>
<keyword id="KW-0547">Nucleotide-binding</keyword>
<keyword id="KW-1185">Reference proteome</keyword>
<keyword id="KW-0762">Sugar transport</keyword>
<keyword id="KW-1278">Translocase</keyword>
<keyword id="KW-0813">Transport</keyword>